<reference key="1">
    <citation type="journal article" date="2005" name="J. Bacteriol.">
        <title>Swine and poultry pathogens: the complete genome sequences of two strains of Mycoplasma hyopneumoniae and a strain of Mycoplasma synoviae.</title>
        <authorList>
            <person name="Vasconcelos A.T.R."/>
            <person name="Ferreira H.B."/>
            <person name="Bizarro C.V."/>
            <person name="Bonatto S.L."/>
            <person name="Carvalho M.O."/>
            <person name="Pinto P.M."/>
            <person name="Almeida D.F."/>
            <person name="Almeida L.G.P."/>
            <person name="Almeida R."/>
            <person name="Alves-Junior L."/>
            <person name="Assuncao E.N."/>
            <person name="Azevedo V.A.C."/>
            <person name="Bogo M.R."/>
            <person name="Brigido M.M."/>
            <person name="Brocchi M."/>
            <person name="Burity H.A."/>
            <person name="Camargo A.A."/>
            <person name="Camargo S.S."/>
            <person name="Carepo M.S."/>
            <person name="Carraro D.M."/>
            <person name="de Mattos Cascardo J.C."/>
            <person name="Castro L.A."/>
            <person name="Cavalcanti G."/>
            <person name="Chemale G."/>
            <person name="Collevatti R.G."/>
            <person name="Cunha C.W."/>
            <person name="Dallagiovanna B."/>
            <person name="Dambros B.P."/>
            <person name="Dellagostin O.A."/>
            <person name="Falcao C."/>
            <person name="Fantinatti-Garboggini F."/>
            <person name="Felipe M.S.S."/>
            <person name="Fiorentin L."/>
            <person name="Franco G.R."/>
            <person name="Freitas N.S.A."/>
            <person name="Frias D."/>
            <person name="Grangeiro T.B."/>
            <person name="Grisard E.C."/>
            <person name="Guimaraes C.T."/>
            <person name="Hungria M."/>
            <person name="Jardim S.N."/>
            <person name="Krieger M.A."/>
            <person name="Laurino J.P."/>
            <person name="Lima L.F.A."/>
            <person name="Lopes M.I."/>
            <person name="Loreto E.L.S."/>
            <person name="Madeira H.M.F."/>
            <person name="Manfio G.P."/>
            <person name="Maranhao A.Q."/>
            <person name="Martinkovics C.T."/>
            <person name="Medeiros S.R.B."/>
            <person name="Moreira M.A.M."/>
            <person name="Neiva M."/>
            <person name="Ramalho-Neto C.E."/>
            <person name="Nicolas M.F."/>
            <person name="Oliveira S.C."/>
            <person name="Paixao R.F.C."/>
            <person name="Pedrosa F.O."/>
            <person name="Pena S.D.J."/>
            <person name="Pereira M."/>
            <person name="Pereira-Ferrari L."/>
            <person name="Piffer I."/>
            <person name="Pinto L.S."/>
            <person name="Potrich D.P."/>
            <person name="Salim A.C.M."/>
            <person name="Santos F.R."/>
            <person name="Schmitt R."/>
            <person name="Schneider M.P.C."/>
            <person name="Schrank A."/>
            <person name="Schrank I.S."/>
            <person name="Schuck A.F."/>
            <person name="Seuanez H.N."/>
            <person name="Silva D.W."/>
            <person name="Silva R."/>
            <person name="Silva S.C."/>
            <person name="Soares C.M.A."/>
            <person name="Souza K.R.L."/>
            <person name="Souza R.C."/>
            <person name="Staats C.C."/>
            <person name="Steffens M.B.R."/>
            <person name="Teixeira S.M.R."/>
            <person name="Urmenyi T.P."/>
            <person name="Vainstein M.H."/>
            <person name="Zuccherato L.W."/>
            <person name="Simpson A.J.G."/>
            <person name="Zaha A."/>
        </authorList>
    </citation>
    <scope>NUCLEOTIDE SEQUENCE [LARGE SCALE GENOMIC DNA]</scope>
    <source>
        <strain>53</strain>
    </source>
</reference>
<sequence>MTQAVEYKGLGRRKSSVARVIIRPGKGEFHINKRPAREYLTSDLYLKDANQPFVLTETFQKFDTFVNVKGGGLNGQAGAIRLGIARALLHASPDYRTKLKAEGMLTRDARIKERKKPGLRAARRARQFSKR</sequence>
<proteinExistence type="inferred from homology"/>
<organism>
    <name type="scientific">Mycoplasmopsis synoviae (strain 53)</name>
    <name type="common">Mycoplasma synoviae</name>
    <dbReference type="NCBI Taxonomy" id="262723"/>
    <lineage>
        <taxon>Bacteria</taxon>
        <taxon>Bacillati</taxon>
        <taxon>Mycoplasmatota</taxon>
        <taxon>Mycoplasmoidales</taxon>
        <taxon>Metamycoplasmataceae</taxon>
        <taxon>Mycoplasmopsis</taxon>
    </lineage>
</organism>
<dbReference type="EMBL" id="AE017245">
    <property type="protein sequence ID" value="AAZ43498.2"/>
    <property type="molecule type" value="Genomic_DNA"/>
</dbReference>
<dbReference type="RefSeq" id="WP_011283241.1">
    <property type="nucleotide sequence ID" value="NC_007294.1"/>
</dbReference>
<dbReference type="SMR" id="Q4A6X3"/>
<dbReference type="STRING" id="262723.MS53_0077"/>
<dbReference type="GeneID" id="93529888"/>
<dbReference type="KEGG" id="msy:MS53_0077"/>
<dbReference type="eggNOG" id="COG0103">
    <property type="taxonomic scope" value="Bacteria"/>
</dbReference>
<dbReference type="HOGENOM" id="CLU_046483_2_1_14"/>
<dbReference type="OrthoDB" id="9803965at2"/>
<dbReference type="Proteomes" id="UP000000549">
    <property type="component" value="Chromosome"/>
</dbReference>
<dbReference type="GO" id="GO:0022627">
    <property type="term" value="C:cytosolic small ribosomal subunit"/>
    <property type="evidence" value="ECO:0007669"/>
    <property type="project" value="TreeGrafter"/>
</dbReference>
<dbReference type="GO" id="GO:0003723">
    <property type="term" value="F:RNA binding"/>
    <property type="evidence" value="ECO:0007669"/>
    <property type="project" value="TreeGrafter"/>
</dbReference>
<dbReference type="GO" id="GO:0003735">
    <property type="term" value="F:structural constituent of ribosome"/>
    <property type="evidence" value="ECO:0007669"/>
    <property type="project" value="InterPro"/>
</dbReference>
<dbReference type="GO" id="GO:0006412">
    <property type="term" value="P:translation"/>
    <property type="evidence" value="ECO:0007669"/>
    <property type="project" value="UniProtKB-UniRule"/>
</dbReference>
<dbReference type="FunFam" id="3.30.230.10:FF:000001">
    <property type="entry name" value="30S ribosomal protein S9"/>
    <property type="match status" value="1"/>
</dbReference>
<dbReference type="Gene3D" id="3.30.230.10">
    <property type="match status" value="1"/>
</dbReference>
<dbReference type="HAMAP" id="MF_00532_B">
    <property type="entry name" value="Ribosomal_uS9_B"/>
    <property type="match status" value="1"/>
</dbReference>
<dbReference type="InterPro" id="IPR020568">
    <property type="entry name" value="Ribosomal_Su5_D2-typ_SF"/>
</dbReference>
<dbReference type="InterPro" id="IPR000754">
    <property type="entry name" value="Ribosomal_uS9"/>
</dbReference>
<dbReference type="InterPro" id="IPR023035">
    <property type="entry name" value="Ribosomal_uS9_bac/plastid"/>
</dbReference>
<dbReference type="InterPro" id="IPR020574">
    <property type="entry name" value="Ribosomal_uS9_CS"/>
</dbReference>
<dbReference type="InterPro" id="IPR014721">
    <property type="entry name" value="Ribsml_uS5_D2-typ_fold_subgr"/>
</dbReference>
<dbReference type="NCBIfam" id="NF001099">
    <property type="entry name" value="PRK00132.1"/>
    <property type="match status" value="1"/>
</dbReference>
<dbReference type="PANTHER" id="PTHR21569">
    <property type="entry name" value="RIBOSOMAL PROTEIN S9"/>
    <property type="match status" value="1"/>
</dbReference>
<dbReference type="PANTHER" id="PTHR21569:SF1">
    <property type="entry name" value="SMALL RIBOSOMAL SUBUNIT PROTEIN US9M"/>
    <property type="match status" value="1"/>
</dbReference>
<dbReference type="Pfam" id="PF00380">
    <property type="entry name" value="Ribosomal_S9"/>
    <property type="match status" value="1"/>
</dbReference>
<dbReference type="SUPFAM" id="SSF54211">
    <property type="entry name" value="Ribosomal protein S5 domain 2-like"/>
    <property type="match status" value="1"/>
</dbReference>
<dbReference type="PROSITE" id="PS00360">
    <property type="entry name" value="RIBOSOMAL_S9"/>
    <property type="match status" value="1"/>
</dbReference>
<feature type="chain" id="PRO_1000128143" description="Small ribosomal subunit protein uS9">
    <location>
        <begin position="1"/>
        <end position="131"/>
    </location>
</feature>
<comment type="similarity">
    <text evidence="1">Belongs to the universal ribosomal protein uS9 family.</text>
</comment>
<accession>Q4A6X3</accession>
<protein>
    <recommendedName>
        <fullName evidence="1">Small ribosomal subunit protein uS9</fullName>
    </recommendedName>
    <alternativeName>
        <fullName evidence="2">30S ribosomal protein S9</fullName>
    </alternativeName>
</protein>
<gene>
    <name evidence="1" type="primary">rpsI</name>
    <name type="ordered locus">MS53_0077</name>
</gene>
<keyword id="KW-1185">Reference proteome</keyword>
<keyword id="KW-0687">Ribonucleoprotein</keyword>
<keyword id="KW-0689">Ribosomal protein</keyword>
<name>RS9_MYCS5</name>
<evidence type="ECO:0000255" key="1">
    <source>
        <dbReference type="HAMAP-Rule" id="MF_00532"/>
    </source>
</evidence>
<evidence type="ECO:0000305" key="2"/>